<gene>
    <name type="primary">ohrR</name>
    <name type="synonym">ykmA</name>
    <name type="ordered locus">BSU13150</name>
</gene>
<protein>
    <recommendedName>
        <fullName>Organic hydroperoxide resistance transcriptional regulator</fullName>
    </recommendedName>
</protein>
<organism>
    <name type="scientific">Bacillus subtilis (strain 168)</name>
    <dbReference type="NCBI Taxonomy" id="224308"/>
    <lineage>
        <taxon>Bacteria</taxon>
        <taxon>Bacillati</taxon>
        <taxon>Bacillota</taxon>
        <taxon>Bacilli</taxon>
        <taxon>Bacillales</taxon>
        <taxon>Bacillaceae</taxon>
        <taxon>Bacillus</taxon>
    </lineage>
</organism>
<dbReference type="EMBL" id="AJ002571">
    <property type="protein sequence ID" value="CAA05594.1"/>
    <property type="molecule type" value="Genomic_DNA"/>
</dbReference>
<dbReference type="EMBL" id="AL009126">
    <property type="protein sequence ID" value="CAB13172.1"/>
    <property type="molecule type" value="Genomic_DNA"/>
</dbReference>
<dbReference type="PIR" id="E69857">
    <property type="entry name" value="E69857"/>
</dbReference>
<dbReference type="RefSeq" id="NP_389198.1">
    <property type="nucleotide sequence ID" value="NC_000964.3"/>
</dbReference>
<dbReference type="RefSeq" id="WP_003245653.1">
    <property type="nucleotide sequence ID" value="NZ_OZ025638.1"/>
</dbReference>
<dbReference type="PDB" id="1Z91">
    <property type="method" value="X-ray"/>
    <property type="resolution" value="2.50 A"/>
    <property type="chains" value="A=1-147"/>
</dbReference>
<dbReference type="PDB" id="1Z9C">
    <property type="method" value="X-ray"/>
    <property type="resolution" value="2.64 A"/>
    <property type="chains" value="A/B/C/D/E/F=1-147"/>
</dbReference>
<dbReference type="PDBsum" id="1Z91"/>
<dbReference type="PDBsum" id="1Z9C"/>
<dbReference type="SMR" id="O34777"/>
<dbReference type="FunCoup" id="O34777">
    <property type="interactions" value="100"/>
</dbReference>
<dbReference type="STRING" id="224308.BSU13150"/>
<dbReference type="PaxDb" id="224308-BSU13150"/>
<dbReference type="EnsemblBacteria" id="CAB13172">
    <property type="protein sequence ID" value="CAB13172"/>
    <property type="gene ID" value="BSU_13150"/>
</dbReference>
<dbReference type="GeneID" id="939850"/>
<dbReference type="KEGG" id="bsu:BSU13150"/>
<dbReference type="PATRIC" id="fig|224308.179.peg.1427"/>
<dbReference type="eggNOG" id="COG1846">
    <property type="taxonomic scope" value="Bacteria"/>
</dbReference>
<dbReference type="InParanoid" id="O34777"/>
<dbReference type="OrthoDB" id="9806864at2"/>
<dbReference type="PhylomeDB" id="O34777"/>
<dbReference type="BioCyc" id="BSUB:BSU13150-MONOMER"/>
<dbReference type="EvolutionaryTrace" id="O34777"/>
<dbReference type="Proteomes" id="UP000001570">
    <property type="component" value="Chromosome"/>
</dbReference>
<dbReference type="GO" id="GO:0005737">
    <property type="term" value="C:cytoplasm"/>
    <property type="evidence" value="ECO:0007669"/>
    <property type="project" value="UniProtKB-SubCell"/>
</dbReference>
<dbReference type="GO" id="GO:0001227">
    <property type="term" value="F:DNA-binding transcription repressor activity, RNA polymerase II-specific"/>
    <property type="evidence" value="ECO:0000315"/>
    <property type="project" value="UniProtKB"/>
</dbReference>
<dbReference type="GO" id="GO:0042802">
    <property type="term" value="F:identical protein binding"/>
    <property type="evidence" value="ECO:0000314"/>
    <property type="project" value="UniProtKB"/>
</dbReference>
<dbReference type="GO" id="GO:0042803">
    <property type="term" value="F:protein homodimerization activity"/>
    <property type="evidence" value="ECO:0000314"/>
    <property type="project" value="UniProtKB"/>
</dbReference>
<dbReference type="GO" id="GO:0000977">
    <property type="term" value="F:RNA polymerase II transcription regulatory region sequence-specific DNA binding"/>
    <property type="evidence" value="ECO:0000315"/>
    <property type="project" value="UniProtKB"/>
</dbReference>
<dbReference type="GO" id="GO:0045892">
    <property type="term" value="P:negative regulation of DNA-templated transcription"/>
    <property type="evidence" value="ECO:0000314"/>
    <property type="project" value="UniProtKB"/>
</dbReference>
<dbReference type="GO" id="GO:0000122">
    <property type="term" value="P:negative regulation of transcription by RNA polymerase II"/>
    <property type="evidence" value="ECO:0000314"/>
    <property type="project" value="UniProtKB"/>
</dbReference>
<dbReference type="GO" id="GO:0006355">
    <property type="term" value="P:regulation of DNA-templated transcription"/>
    <property type="evidence" value="ECO:0000318"/>
    <property type="project" value="GO_Central"/>
</dbReference>
<dbReference type="GO" id="GO:0042542">
    <property type="term" value="P:response to hydrogen peroxide"/>
    <property type="evidence" value="ECO:0000315"/>
    <property type="project" value="UniProtKB"/>
</dbReference>
<dbReference type="GO" id="GO:0006950">
    <property type="term" value="P:response to stress"/>
    <property type="evidence" value="ECO:0000318"/>
    <property type="project" value="GO_Central"/>
</dbReference>
<dbReference type="FunFam" id="1.10.10.10:FF:000163">
    <property type="entry name" value="MarR family transcriptional regulator"/>
    <property type="match status" value="1"/>
</dbReference>
<dbReference type="Gene3D" id="1.10.10.10">
    <property type="entry name" value="Winged helix-like DNA-binding domain superfamily/Winged helix DNA-binding domain"/>
    <property type="match status" value="1"/>
</dbReference>
<dbReference type="InterPro" id="IPR000835">
    <property type="entry name" value="HTH_MarR-typ"/>
</dbReference>
<dbReference type="InterPro" id="IPR039422">
    <property type="entry name" value="MarR/SlyA-like"/>
</dbReference>
<dbReference type="InterPro" id="IPR055166">
    <property type="entry name" value="Transc_reg_Sar_Rot_HTH"/>
</dbReference>
<dbReference type="InterPro" id="IPR036388">
    <property type="entry name" value="WH-like_DNA-bd_sf"/>
</dbReference>
<dbReference type="InterPro" id="IPR036390">
    <property type="entry name" value="WH_DNA-bd_sf"/>
</dbReference>
<dbReference type="PANTHER" id="PTHR33164:SF5">
    <property type="entry name" value="ORGANIC HYDROPEROXIDE RESISTANCE TRANSCRIPTIONAL REGULATOR"/>
    <property type="match status" value="1"/>
</dbReference>
<dbReference type="PANTHER" id="PTHR33164">
    <property type="entry name" value="TRANSCRIPTIONAL REGULATOR, MARR FAMILY"/>
    <property type="match status" value="1"/>
</dbReference>
<dbReference type="Pfam" id="PF22381">
    <property type="entry name" value="Staph_reg_Sar_Rot"/>
    <property type="match status" value="1"/>
</dbReference>
<dbReference type="PRINTS" id="PR00598">
    <property type="entry name" value="HTHMARR"/>
</dbReference>
<dbReference type="SMART" id="SM00347">
    <property type="entry name" value="HTH_MARR"/>
    <property type="match status" value="1"/>
</dbReference>
<dbReference type="SUPFAM" id="SSF46785">
    <property type="entry name" value="Winged helix' DNA-binding domain"/>
    <property type="match status" value="1"/>
</dbReference>
<dbReference type="PROSITE" id="PS50995">
    <property type="entry name" value="HTH_MARR_2"/>
    <property type="match status" value="1"/>
</dbReference>
<name>OHRR_BACSU</name>
<keyword id="KW-0002">3D-structure</keyword>
<keyword id="KW-0963">Cytoplasm</keyword>
<keyword id="KW-0903">Direct protein sequencing</keyword>
<keyword id="KW-0238">DNA-binding</keyword>
<keyword id="KW-0558">Oxidation</keyword>
<keyword id="KW-1185">Reference proteome</keyword>
<keyword id="KW-0678">Repressor</keyword>
<keyword id="KW-0804">Transcription</keyword>
<keyword id="KW-0805">Transcription regulation</keyword>
<evidence type="ECO:0000255" key="1">
    <source>
        <dbReference type="PROSITE-ProRule" id="PRU00345"/>
    </source>
</evidence>
<evidence type="ECO:0000269" key="2">
    <source>
    </source>
</evidence>
<evidence type="ECO:0000269" key="3">
    <source>
    </source>
</evidence>
<evidence type="ECO:0000269" key="4">
    <source>
    </source>
</evidence>
<evidence type="ECO:0000269" key="5">
    <source>
    </source>
</evidence>
<evidence type="ECO:0000269" key="6">
    <source>
    </source>
</evidence>
<evidence type="ECO:0000269" key="7">
    <source>
    </source>
</evidence>
<evidence type="ECO:0000305" key="8">
    <source>
    </source>
</evidence>
<evidence type="ECO:0000305" key="9">
    <source>
    </source>
</evidence>
<evidence type="ECO:0007829" key="10">
    <source>
        <dbReference type="PDB" id="1Z91"/>
    </source>
</evidence>
<comment type="function">
    <text evidence="2 6">Organic peroxide sensor (PubMed:11418552). Represses the expression of the peroxide-inducible gene ohrA by cooperative binding to two inverted repeat elements (PubMed:11418552, PubMed:24313874).</text>
</comment>
<comment type="activity regulation">
    <text>Inactivated by oxidation of Cys-15 to a sulfenic acid.</text>
</comment>
<comment type="subunit">
    <text>Homodimer.</text>
</comment>
<comment type="subcellular location">
    <subcellularLocation>
        <location>Cytoplasm</location>
    </subcellularLocation>
</comment>
<comment type="PTM">
    <text evidence="3 4 5 6 7">Cys-15 is oxidized by organic peroxides to cysteine sulfenic acid (Cys-SOH). This can react with the alpha-amido of the following residue to form the sulfenamide cross-link. Oxidation or cross-linking results in the loss of DNA-binding activity and the inactivation of repressor function. Both the cysteine sulfenic acid and the sulfenamide cross-link can react with free cysteine or bacillithiol (BSH) to form mixed disulfides. Further reduction of OhrR by free sulfhydryl compounds restores repressor activity.</text>
</comment>
<sequence>MENKFDHMKLENQLCFLLYASSREMTKQYKPLLDKLNITYPQYLALLLLWEHETLTVKKMGEQLYLDSGTLTPMLKRMEQQGLITRKRSEEDERSVLISLTEDGALLKEKAVDIPGTILGLSKQSGEDLKQLKSALYTLLETLHQKN</sequence>
<reference key="1">
    <citation type="submission" date="1997-11" db="EMBL/GenBank/DDBJ databases">
        <title>Sequence of the Bacillus subtilis genome between xlyA and ykoR.</title>
        <authorList>
            <person name="Devine K.M."/>
        </authorList>
    </citation>
    <scope>NUCLEOTIDE SEQUENCE [GENOMIC DNA]</scope>
    <source>
        <strain>168</strain>
    </source>
</reference>
<reference key="2">
    <citation type="journal article" date="1997" name="Nature">
        <title>The complete genome sequence of the Gram-positive bacterium Bacillus subtilis.</title>
        <authorList>
            <person name="Kunst F."/>
            <person name="Ogasawara N."/>
            <person name="Moszer I."/>
            <person name="Albertini A.M."/>
            <person name="Alloni G."/>
            <person name="Azevedo V."/>
            <person name="Bertero M.G."/>
            <person name="Bessieres P."/>
            <person name="Bolotin A."/>
            <person name="Borchert S."/>
            <person name="Borriss R."/>
            <person name="Boursier L."/>
            <person name="Brans A."/>
            <person name="Braun M."/>
            <person name="Brignell S.C."/>
            <person name="Bron S."/>
            <person name="Brouillet S."/>
            <person name="Bruschi C.V."/>
            <person name="Caldwell B."/>
            <person name="Capuano V."/>
            <person name="Carter N.M."/>
            <person name="Choi S.-K."/>
            <person name="Codani J.-J."/>
            <person name="Connerton I.F."/>
            <person name="Cummings N.J."/>
            <person name="Daniel R.A."/>
            <person name="Denizot F."/>
            <person name="Devine K.M."/>
            <person name="Duesterhoeft A."/>
            <person name="Ehrlich S.D."/>
            <person name="Emmerson P.T."/>
            <person name="Entian K.-D."/>
            <person name="Errington J."/>
            <person name="Fabret C."/>
            <person name="Ferrari E."/>
            <person name="Foulger D."/>
            <person name="Fritz C."/>
            <person name="Fujita M."/>
            <person name="Fujita Y."/>
            <person name="Fuma S."/>
            <person name="Galizzi A."/>
            <person name="Galleron N."/>
            <person name="Ghim S.-Y."/>
            <person name="Glaser P."/>
            <person name="Goffeau A."/>
            <person name="Golightly E.J."/>
            <person name="Grandi G."/>
            <person name="Guiseppi G."/>
            <person name="Guy B.J."/>
            <person name="Haga K."/>
            <person name="Haiech J."/>
            <person name="Harwood C.R."/>
            <person name="Henaut A."/>
            <person name="Hilbert H."/>
            <person name="Holsappel S."/>
            <person name="Hosono S."/>
            <person name="Hullo M.-F."/>
            <person name="Itaya M."/>
            <person name="Jones L.-M."/>
            <person name="Joris B."/>
            <person name="Karamata D."/>
            <person name="Kasahara Y."/>
            <person name="Klaerr-Blanchard M."/>
            <person name="Klein C."/>
            <person name="Kobayashi Y."/>
            <person name="Koetter P."/>
            <person name="Koningstein G."/>
            <person name="Krogh S."/>
            <person name="Kumano M."/>
            <person name="Kurita K."/>
            <person name="Lapidus A."/>
            <person name="Lardinois S."/>
            <person name="Lauber J."/>
            <person name="Lazarevic V."/>
            <person name="Lee S.-M."/>
            <person name="Levine A."/>
            <person name="Liu H."/>
            <person name="Masuda S."/>
            <person name="Mauel C."/>
            <person name="Medigue C."/>
            <person name="Medina N."/>
            <person name="Mellado R.P."/>
            <person name="Mizuno M."/>
            <person name="Moestl D."/>
            <person name="Nakai S."/>
            <person name="Noback M."/>
            <person name="Noone D."/>
            <person name="O'Reilly M."/>
            <person name="Ogawa K."/>
            <person name="Ogiwara A."/>
            <person name="Oudega B."/>
            <person name="Park S.-H."/>
            <person name="Parro V."/>
            <person name="Pohl T.M."/>
            <person name="Portetelle D."/>
            <person name="Porwollik S."/>
            <person name="Prescott A.M."/>
            <person name="Presecan E."/>
            <person name="Pujic P."/>
            <person name="Purnelle B."/>
            <person name="Rapoport G."/>
            <person name="Rey M."/>
            <person name="Reynolds S."/>
            <person name="Rieger M."/>
            <person name="Rivolta C."/>
            <person name="Rocha E."/>
            <person name="Roche B."/>
            <person name="Rose M."/>
            <person name="Sadaie Y."/>
            <person name="Sato T."/>
            <person name="Scanlan E."/>
            <person name="Schleich S."/>
            <person name="Schroeter R."/>
            <person name="Scoffone F."/>
            <person name="Sekiguchi J."/>
            <person name="Sekowska A."/>
            <person name="Seror S.J."/>
            <person name="Serror P."/>
            <person name="Shin B.-S."/>
            <person name="Soldo B."/>
            <person name="Sorokin A."/>
            <person name="Tacconi E."/>
            <person name="Takagi T."/>
            <person name="Takahashi H."/>
            <person name="Takemaru K."/>
            <person name="Takeuchi M."/>
            <person name="Tamakoshi A."/>
            <person name="Tanaka T."/>
            <person name="Terpstra P."/>
            <person name="Tognoni A."/>
            <person name="Tosato V."/>
            <person name="Uchiyama S."/>
            <person name="Vandenbol M."/>
            <person name="Vannier F."/>
            <person name="Vassarotti A."/>
            <person name="Viari A."/>
            <person name="Wambutt R."/>
            <person name="Wedler E."/>
            <person name="Wedler H."/>
            <person name="Weitzenegger T."/>
            <person name="Winters P."/>
            <person name="Wipat A."/>
            <person name="Yamamoto H."/>
            <person name="Yamane K."/>
            <person name="Yasumoto K."/>
            <person name="Yata K."/>
            <person name="Yoshida K."/>
            <person name="Yoshikawa H.-F."/>
            <person name="Zumstein E."/>
            <person name="Yoshikawa H."/>
            <person name="Danchin A."/>
        </authorList>
    </citation>
    <scope>NUCLEOTIDE SEQUENCE [LARGE SCALE GENOMIC DNA]</scope>
    <source>
        <strain>168</strain>
    </source>
</reference>
<reference key="3">
    <citation type="journal article" date="2007" name="Proc. Natl. Acad. Sci. U.S.A.">
        <title>A complex thiolate switch regulates the Bacillus subtilis organic peroxide sensor OhrR.</title>
        <authorList>
            <person name="Lee J.W."/>
            <person name="Soonsanga S."/>
            <person name="Helmann J.D."/>
        </authorList>
    </citation>
    <scope>PROTEIN SEQUENCE OF 10-23</scope>
    <scope>POST-TRANSLATIONAL MODIFICATIONS AT CYS-15</scope>
</reference>
<reference key="4">
    <citation type="journal article" date="2001" name="J. Bacteriol.">
        <title>OhrR is a repressor of ohrA, a key organic hydroperoxide resistance determinant in Bacillus subtilis.</title>
        <authorList>
            <person name="Fuangthong M."/>
            <person name="Atichartpongkul S."/>
            <person name="Mongkolsuk S."/>
            <person name="Helmann J.D."/>
        </authorList>
    </citation>
    <scope>FUNCTION</scope>
    <source>
        <strain>168</strain>
    </source>
</reference>
<reference key="5">
    <citation type="journal article" date="2002" name="Proc. Natl. Acad. Sci. U.S.A.">
        <title>The OhrR repressor senses organic hydroperoxides by reversible formation of a cysteine-sulfenic acid derivative.</title>
        <authorList>
            <person name="Fuangthong M."/>
            <person name="Helmann J.D."/>
        </authorList>
    </citation>
    <scope>OXIDATION AT CYS-15</scope>
    <scope>MUTAGENESIS OF CYS-15</scope>
</reference>
<reference key="6">
    <citation type="journal article" date="2009" name="Nat. Chem. Biol.">
        <title>Bacillithiol is an antioxidant thiol produced in Bacilli.</title>
        <authorList>
            <person name="Newton G.L."/>
            <person name="Rawat M."/>
            <person name="La Clair J.J."/>
            <person name="Jothivasan V.K."/>
            <person name="Budiarto T."/>
            <person name="Hamilton C.J."/>
            <person name="Claiborne A."/>
            <person name="Helmann J.D."/>
            <person name="Fahey R.C."/>
        </authorList>
    </citation>
    <scope>POST-TRANSLATIONAL MODIFICATION AT CYS-15</scope>
</reference>
<reference key="7">
    <citation type="journal article" date="2014" name="Antioxid. Redox Signal.">
        <title>Redox regulation in Bacillus subtilis: The bacilliredoxins BrxA(YphP) and BrxB(YqiW) function in de-bacillithiolation of S-bacillithiolated OhrR and MetE.</title>
        <authorList>
            <person name="Gaballa A."/>
            <person name="Chi B.K."/>
            <person name="Roberts A.A."/>
            <person name="Becher D."/>
            <person name="Hamilton C.J."/>
            <person name="Antelmann H."/>
            <person name="Helmann J.D."/>
        </authorList>
    </citation>
    <scope>FUNCTION</scope>
    <scope>PTM</scope>
    <scope>POST-TRANSLATIONAL MODIFICATION AT CYS-15</scope>
</reference>
<reference key="8">
    <citation type="journal article" date="2021" name="Redox Biol.">
        <title>The Bacillus subtilis monothiol bacilliredoxin BrxC (YtxJ) and the Bdr (YpdA) disulfide reductase reduce S-bacillithiolated proteins.</title>
        <authorList>
            <person name="Gaballa A."/>
            <person name="Su T.T."/>
            <person name="Helmann J.D."/>
        </authorList>
    </citation>
    <scope>PTM</scope>
    <scope>POST-TRANSLATIONAL MODIFICATION AT CYS-15</scope>
</reference>
<reference key="9">
    <citation type="journal article" date="2005" name="Mol. Cell">
        <title>Structure of an OhrR-ohrA operator complex reveals the DNA binding mechanism of the MarR family.</title>
        <authorList>
            <person name="Hong M."/>
            <person name="Fuangthong M."/>
            <person name="Helmann J.D."/>
            <person name="Brennan R.G."/>
        </authorList>
    </citation>
    <scope>X-RAY CRYSTALLOGRAPHY (2.5 ANGSTROMS) OF 1-147</scope>
    <scope>DIMERIZATION</scope>
</reference>
<accession>O34777</accession>
<proteinExistence type="evidence at protein level"/>
<feature type="chain" id="PRO_0000054376" description="Organic hydroperoxide resistance transcriptional regulator">
    <location>
        <begin position="1"/>
        <end position="147"/>
    </location>
</feature>
<feature type="domain" description="HTH marR-type" evidence="1">
    <location>
        <begin position="11"/>
        <end position="141"/>
    </location>
</feature>
<feature type="DNA-binding region" description="H-T-H motif" evidence="1">
    <location>
        <begin position="57"/>
        <end position="80"/>
    </location>
</feature>
<feature type="modified residue" description="Cysteine sulfenic acid (-SOH); alternate" evidence="3">
    <location>
        <position position="15"/>
    </location>
</feature>
<feature type="modified residue" description="S-bacillithiol cysteine disulfide; alternate" evidence="8 9">
    <location>
        <position position="15"/>
    </location>
</feature>
<feature type="modified residue" description="S-cysteinyl cysteine; alternate" evidence="6">
    <location>
        <position position="15"/>
    </location>
</feature>
<feature type="cross-link" description="N,N-(cysteine-1,S-diyl)phenylalanine (Cys-Phe); alternate">
    <location>
        <begin position="15"/>
        <end position="16"/>
    </location>
</feature>
<feature type="mutagenesis site" description="Full repressor activity, but no modulation by peroxide." evidence="3">
    <original>C</original>
    <variation>G</variation>
    <variation>S</variation>
    <location>
        <position position="15"/>
    </location>
</feature>
<feature type="helix" evidence="10">
    <location>
        <begin position="10"/>
        <end position="12"/>
    </location>
</feature>
<feature type="helix" evidence="10">
    <location>
        <begin position="14"/>
        <end position="26"/>
    </location>
</feature>
<feature type="helix" evidence="10">
    <location>
        <begin position="30"/>
        <end position="33"/>
    </location>
</feature>
<feature type="turn" evidence="10">
    <location>
        <begin position="34"/>
        <end position="36"/>
    </location>
</feature>
<feature type="helix" evidence="10">
    <location>
        <begin position="40"/>
        <end position="52"/>
    </location>
</feature>
<feature type="strand" evidence="10">
    <location>
        <begin position="53"/>
        <end position="56"/>
    </location>
</feature>
<feature type="helix" evidence="10">
    <location>
        <begin position="57"/>
        <end position="62"/>
    </location>
</feature>
<feature type="turn" evidence="10">
    <location>
        <begin position="63"/>
        <end position="65"/>
    </location>
</feature>
<feature type="helix" evidence="10">
    <location>
        <begin position="68"/>
        <end position="81"/>
    </location>
</feature>
<feature type="strand" evidence="10">
    <location>
        <begin position="83"/>
        <end position="85"/>
    </location>
</feature>
<feature type="strand" evidence="10">
    <location>
        <begin position="95"/>
        <end position="100"/>
    </location>
</feature>
<feature type="helix" evidence="10">
    <location>
        <begin position="102"/>
        <end position="105"/>
    </location>
</feature>
<feature type="helix" evidence="10">
    <location>
        <begin position="107"/>
        <end position="110"/>
    </location>
</feature>
<feature type="turn" evidence="10">
    <location>
        <begin position="111"/>
        <end position="113"/>
    </location>
</feature>
<feature type="helix" evidence="10">
    <location>
        <begin position="114"/>
        <end position="121"/>
    </location>
</feature>
<feature type="helix" evidence="10">
    <location>
        <begin position="127"/>
        <end position="142"/>
    </location>
</feature>